<gene>
    <name evidence="25" type="primary">LEP</name>
    <name evidence="25" type="synonym">OB</name>
    <name evidence="25" type="synonym">OBS</name>
</gene>
<proteinExistence type="evidence at protein level"/>
<feature type="signal peptide" evidence="3">
    <location>
        <begin position="1"/>
        <end position="21"/>
    </location>
</feature>
<feature type="chain" id="PRO_0000017685" description="Leptin">
    <location>
        <begin position="22"/>
        <end position="167"/>
    </location>
</feature>
<feature type="disulfide bond">
    <location>
        <begin position="117"/>
        <end position="167"/>
    </location>
</feature>
<feature type="sequence variant" id="VAR_004196">
    <location>
        <position position="49"/>
    </location>
</feature>
<feature type="sequence variant" id="VAR_004197" description="In dbSNP:rs17151919." evidence="19 21">
    <original>V</original>
    <variation>M</variation>
    <location>
        <position position="94"/>
    </location>
</feature>
<feature type="sequence variant" id="VAR_075144" description="In LEPD; no effect on secretion; does not bind or activate LEPR; dbSNP:rs724159998." evidence="16">
    <original>D</original>
    <variation>Y</variation>
    <location>
        <position position="100"/>
    </location>
</feature>
<feature type="sequence variant" id="VAR_008094" description="In LEPD; dbSNP:rs104894023." evidence="20">
    <original>R</original>
    <variation>W</variation>
    <location>
        <position position="105"/>
    </location>
</feature>
<feature type="sequence variant" id="VAR_011955" description="In dbSNP:rs1800564.">
    <original>V</original>
    <variation>M</variation>
    <location>
        <position position="110"/>
    </location>
</feature>
<feature type="sequence conflict" description="In Ref. 8; AAB63507." evidence="22" ref="8">
    <original>Q</original>
    <variation>R</variation>
    <location>
        <position position="96"/>
    </location>
</feature>
<feature type="helix" evidence="26">
    <location>
        <begin position="25"/>
        <end position="44"/>
    </location>
</feature>
<feature type="turn" evidence="27">
    <location>
        <begin position="59"/>
        <end position="61"/>
    </location>
</feature>
<feature type="helix" evidence="26">
    <location>
        <begin position="72"/>
        <end position="87"/>
    </location>
</feature>
<feature type="helix" evidence="26">
    <location>
        <begin position="92"/>
        <end position="114"/>
    </location>
</feature>
<feature type="helix" evidence="26">
    <location>
        <begin position="128"/>
        <end position="131"/>
    </location>
</feature>
<feature type="helix" evidence="26">
    <location>
        <begin position="132"/>
        <end position="135"/>
    </location>
</feature>
<feature type="helix" evidence="26">
    <location>
        <begin position="142"/>
        <end position="160"/>
    </location>
</feature>
<feature type="helix" evidence="26">
    <location>
        <begin position="161"/>
        <end position="163"/>
    </location>
</feature>
<name>LEP_HUMAN</name>
<keyword id="KW-0002">3D-structure</keyword>
<keyword id="KW-0219">Diabetes mellitus</keyword>
<keyword id="KW-0225">Disease variant</keyword>
<keyword id="KW-1015">Disulfide bond</keyword>
<keyword id="KW-0550">Obesity</keyword>
<keyword id="KW-1267">Proteomics identification</keyword>
<keyword id="KW-1185">Reference proteome</keyword>
<keyword id="KW-0964">Secreted</keyword>
<keyword id="KW-0732">Signal</keyword>
<dbReference type="EMBL" id="U18915">
    <property type="protein sequence ID" value="AAA60470.1"/>
    <property type="molecule type" value="mRNA"/>
</dbReference>
<dbReference type="EMBL" id="D49487">
    <property type="protein sequence ID" value="BAA08448.1"/>
    <property type="molecule type" value="mRNA"/>
</dbReference>
<dbReference type="EMBL" id="U43653">
    <property type="protein sequence ID" value="AAC50400.1"/>
    <property type="molecule type" value="mRNA"/>
</dbReference>
<dbReference type="EMBL" id="U43415">
    <property type="protein sequence ID" value="AAC31660.1"/>
    <property type="molecule type" value="Genomic_DNA"/>
</dbReference>
<dbReference type="EMBL" id="D63710">
    <property type="protein sequence ID" value="BAA09839.1"/>
    <property type="molecule type" value="Genomic_DNA"/>
</dbReference>
<dbReference type="EMBL" id="D63519">
    <property type="protein sequence ID" value="BAA09787.1"/>
    <property type="molecule type" value="Genomic_DNA"/>
</dbReference>
<dbReference type="EMBL" id="AF008123">
    <property type="protein sequence ID" value="AAB63507.1"/>
    <property type="molecule type" value="mRNA"/>
</dbReference>
<dbReference type="EMBL" id="AY996373">
    <property type="protein sequence ID" value="AAX81413.1"/>
    <property type="molecule type" value="Genomic_DNA"/>
</dbReference>
<dbReference type="EMBL" id="BC060830">
    <property type="protein sequence ID" value="AAH60830.1"/>
    <property type="molecule type" value="mRNA"/>
</dbReference>
<dbReference type="EMBL" id="BC069452">
    <property type="protein sequence ID" value="AAH69452.1"/>
    <property type="molecule type" value="mRNA"/>
</dbReference>
<dbReference type="EMBL" id="BC069527">
    <property type="protein sequence ID" value="AAH69527.1"/>
    <property type="molecule type" value="mRNA"/>
</dbReference>
<dbReference type="CCDS" id="CCDS5800.1"/>
<dbReference type="PIR" id="A38952">
    <property type="entry name" value="LTHU"/>
</dbReference>
<dbReference type="PIR" id="I53166">
    <property type="entry name" value="I53166"/>
</dbReference>
<dbReference type="RefSeq" id="NP_000221.1">
    <property type="nucleotide sequence ID" value="NM_000230.3"/>
</dbReference>
<dbReference type="RefSeq" id="XP_005250397.1">
    <property type="nucleotide sequence ID" value="XM_005250340.4"/>
</dbReference>
<dbReference type="PDB" id="1AX8">
    <property type="method" value="X-ray"/>
    <property type="resolution" value="2.40 A"/>
    <property type="chains" value="A=22-167"/>
</dbReference>
<dbReference type="PDB" id="7Z3Q">
    <property type="method" value="X-ray"/>
    <property type="resolution" value="3.62 A"/>
    <property type="chains" value="A/C/E=22-167"/>
</dbReference>
<dbReference type="PDB" id="8AVE">
    <property type="method" value="EM"/>
    <property type="resolution" value="5.62 A"/>
    <property type="chains" value="A/C=22-167"/>
</dbReference>
<dbReference type="PDB" id="8AVF">
    <property type="method" value="EM"/>
    <property type="resolution" value="6.45 A"/>
    <property type="chains" value="A/C/E=22-167"/>
</dbReference>
<dbReference type="PDB" id="8AVO">
    <property type="method" value="EM"/>
    <property type="resolution" value="6.84 A"/>
    <property type="chains" value="A/C/E=22-167"/>
</dbReference>
<dbReference type="PDB" id="8K6Z">
    <property type="method" value="NMR"/>
    <property type="chains" value="A=22-167"/>
</dbReference>
<dbReference type="PDB" id="8X80">
    <property type="method" value="EM"/>
    <property type="resolution" value="3.88 A"/>
    <property type="chains" value="D/E/F=1-167"/>
</dbReference>
<dbReference type="PDB" id="8X81">
    <property type="method" value="EM"/>
    <property type="resolution" value="3.77 A"/>
    <property type="chains" value="D/E/F=1-167"/>
</dbReference>
<dbReference type="PDB" id="8X85">
    <property type="method" value="EM"/>
    <property type="resolution" value="3.58 A"/>
    <property type="chains" value="C/D=1-167"/>
</dbReference>
<dbReference type="PDBsum" id="1AX8"/>
<dbReference type="PDBsum" id="7Z3Q"/>
<dbReference type="PDBsum" id="8AVE"/>
<dbReference type="PDBsum" id="8AVF"/>
<dbReference type="PDBsum" id="8AVO"/>
<dbReference type="PDBsum" id="8K6Z"/>
<dbReference type="PDBsum" id="8X80"/>
<dbReference type="PDBsum" id="8X81"/>
<dbReference type="PDBsum" id="8X85"/>
<dbReference type="EMDB" id="EMD-15680"/>
<dbReference type="EMDB" id="EMD-15681"/>
<dbReference type="EMDB" id="EMD-15683"/>
<dbReference type="EMDB" id="EMD-38131"/>
<dbReference type="EMDB" id="EMD-38132"/>
<dbReference type="EMDB" id="EMD-38136"/>
<dbReference type="PCDDB" id="P41159"/>
<dbReference type="SMR" id="P41159"/>
<dbReference type="BioGRID" id="110143">
    <property type="interactions" value="19"/>
</dbReference>
<dbReference type="DIP" id="DIP-6116N"/>
<dbReference type="FunCoup" id="P41159">
    <property type="interactions" value="885"/>
</dbReference>
<dbReference type="IntAct" id="P41159">
    <property type="interactions" value="12"/>
</dbReference>
<dbReference type="STRING" id="9606.ENSP00000312652"/>
<dbReference type="iPTMnet" id="P41159"/>
<dbReference type="MetOSite" id="P41159"/>
<dbReference type="PhosphoSitePlus" id="P41159"/>
<dbReference type="BioMuta" id="LEP"/>
<dbReference type="MassIVE" id="P41159"/>
<dbReference type="PaxDb" id="9606-ENSP00000312652"/>
<dbReference type="PeptideAtlas" id="P41159"/>
<dbReference type="ProteomicsDB" id="55406"/>
<dbReference type="ABCD" id="P41159">
    <property type="antibodies" value="1 sequenced antibody"/>
</dbReference>
<dbReference type="Antibodypedia" id="3389">
    <property type="antibodies" value="1409 antibodies from 44 providers"/>
</dbReference>
<dbReference type="DNASU" id="3952"/>
<dbReference type="Ensembl" id="ENST00000308868.5">
    <property type="protein sequence ID" value="ENSP00000312652.4"/>
    <property type="gene ID" value="ENSG00000174697.5"/>
</dbReference>
<dbReference type="GeneID" id="3952"/>
<dbReference type="KEGG" id="hsa:3952"/>
<dbReference type="MANE-Select" id="ENST00000308868.5">
    <property type="protein sequence ID" value="ENSP00000312652.4"/>
    <property type="RefSeq nucleotide sequence ID" value="NM_000230.3"/>
    <property type="RefSeq protein sequence ID" value="NP_000221.1"/>
</dbReference>
<dbReference type="UCSC" id="uc003vml.3">
    <property type="organism name" value="human"/>
</dbReference>
<dbReference type="AGR" id="HGNC:6553"/>
<dbReference type="CTD" id="3952"/>
<dbReference type="DisGeNET" id="3952"/>
<dbReference type="GeneCards" id="LEP"/>
<dbReference type="HGNC" id="HGNC:6553">
    <property type="gene designation" value="LEP"/>
</dbReference>
<dbReference type="HPA" id="ENSG00000174697">
    <property type="expression patterns" value="Group enriched (adipose tissue, breast)"/>
</dbReference>
<dbReference type="MalaCards" id="LEP"/>
<dbReference type="MIM" id="164160">
    <property type="type" value="gene"/>
</dbReference>
<dbReference type="MIM" id="614962">
    <property type="type" value="phenotype"/>
</dbReference>
<dbReference type="neXtProt" id="NX_P41159"/>
<dbReference type="OpenTargets" id="ENSG00000174697"/>
<dbReference type="Orphanet" id="66628">
    <property type="disease" value="Obesity due to congenital leptin deficiency"/>
</dbReference>
<dbReference type="PharmGKB" id="PA228"/>
<dbReference type="VEuPathDB" id="HostDB:ENSG00000174697"/>
<dbReference type="eggNOG" id="ENOG502S5K5">
    <property type="taxonomic scope" value="Eukaryota"/>
</dbReference>
<dbReference type="GeneTree" id="ENSGT00390000011772"/>
<dbReference type="HOGENOM" id="CLU_132715_0_0_1"/>
<dbReference type="InParanoid" id="P41159"/>
<dbReference type="OMA" id="MRCGPLC"/>
<dbReference type="OrthoDB" id="9872512at2759"/>
<dbReference type="PAN-GO" id="P41159">
    <property type="GO annotations" value="13 GO annotations based on evolutionary models"/>
</dbReference>
<dbReference type="PhylomeDB" id="P41159"/>
<dbReference type="TreeFam" id="TF105086"/>
<dbReference type="PathwayCommons" id="P41159"/>
<dbReference type="Reactome" id="R-HSA-2586552">
    <property type="pathway name" value="Signaling by Leptin"/>
</dbReference>
<dbReference type="Reactome" id="R-HSA-381340">
    <property type="pathway name" value="Transcriptional regulation of white adipocyte differentiation"/>
</dbReference>
<dbReference type="Reactome" id="R-HSA-381771">
    <property type="pathway name" value="Synthesis, secretion, and inactivation of Glucagon-like Peptide-1 (GLP-1)"/>
</dbReference>
<dbReference type="Reactome" id="R-HSA-422085">
    <property type="pathway name" value="Synthesis, secretion, and deacylation of Ghrelin"/>
</dbReference>
<dbReference type="SignaLink" id="P41159"/>
<dbReference type="SIGNOR" id="P41159"/>
<dbReference type="BioGRID-ORCS" id="3952">
    <property type="hits" value="14 hits in 1148 CRISPR screens"/>
</dbReference>
<dbReference type="EvolutionaryTrace" id="P41159"/>
<dbReference type="GeneWiki" id="Leptin"/>
<dbReference type="GenomeRNAi" id="3952"/>
<dbReference type="Pharos" id="P41159">
    <property type="development level" value="Tbio"/>
</dbReference>
<dbReference type="PRO" id="PR:P41159"/>
<dbReference type="Proteomes" id="UP000005640">
    <property type="component" value="Chromosome 7"/>
</dbReference>
<dbReference type="RNAct" id="P41159">
    <property type="molecule type" value="protein"/>
</dbReference>
<dbReference type="Bgee" id="ENSG00000174697">
    <property type="expression patterns" value="Expressed in skin of hip and 100 other cell types or tissues"/>
</dbReference>
<dbReference type="ExpressionAtlas" id="P41159">
    <property type="expression patterns" value="baseline and differential"/>
</dbReference>
<dbReference type="GO" id="GO:0005829">
    <property type="term" value="C:cytosol"/>
    <property type="evidence" value="ECO:0000250"/>
    <property type="project" value="ARUK-UCL"/>
</dbReference>
<dbReference type="GO" id="GO:0005576">
    <property type="term" value="C:extracellular region"/>
    <property type="evidence" value="ECO:0000304"/>
    <property type="project" value="Reactome"/>
</dbReference>
<dbReference type="GO" id="GO:0005615">
    <property type="term" value="C:extracellular space"/>
    <property type="evidence" value="ECO:0000250"/>
    <property type="project" value="HGNC-UCL"/>
</dbReference>
<dbReference type="GO" id="GO:0003677">
    <property type="term" value="F:DNA binding"/>
    <property type="evidence" value="ECO:0007669"/>
    <property type="project" value="Ensembl"/>
</dbReference>
<dbReference type="GO" id="GO:0005179">
    <property type="term" value="F:hormone activity"/>
    <property type="evidence" value="ECO:0000314"/>
    <property type="project" value="ARUK-UCL"/>
</dbReference>
<dbReference type="GO" id="GO:1990460">
    <property type="term" value="F:leptin receptor binding"/>
    <property type="evidence" value="ECO:0000353"/>
    <property type="project" value="ARUK-UCL"/>
</dbReference>
<dbReference type="GO" id="GO:0051428">
    <property type="term" value="F:peptide hormone receptor binding"/>
    <property type="evidence" value="ECO:0000318"/>
    <property type="project" value="GO_Central"/>
</dbReference>
<dbReference type="GO" id="GO:1990051">
    <property type="term" value="P:activation of protein kinase C activity"/>
    <property type="evidence" value="ECO:0000314"/>
    <property type="project" value="UniProtKB"/>
</dbReference>
<dbReference type="GO" id="GO:0060612">
    <property type="term" value="P:adipose tissue development"/>
    <property type="evidence" value="ECO:0007669"/>
    <property type="project" value="Ensembl"/>
</dbReference>
<dbReference type="GO" id="GO:0008343">
    <property type="term" value="P:adult feeding behavior"/>
    <property type="evidence" value="ECO:0000250"/>
    <property type="project" value="HGNC-UCL"/>
</dbReference>
<dbReference type="GO" id="GO:0001525">
    <property type="term" value="P:angiogenesis"/>
    <property type="evidence" value="ECO:0000314"/>
    <property type="project" value="UniProtKB"/>
</dbReference>
<dbReference type="GO" id="GO:0035904">
    <property type="term" value="P:aorta development"/>
    <property type="evidence" value="ECO:0007669"/>
    <property type="project" value="Ensembl"/>
</dbReference>
<dbReference type="GO" id="GO:0008206">
    <property type="term" value="P:bile acid metabolic process"/>
    <property type="evidence" value="ECO:0007669"/>
    <property type="project" value="Ensembl"/>
</dbReference>
<dbReference type="GO" id="GO:0098868">
    <property type="term" value="P:bone growth"/>
    <property type="evidence" value="ECO:0000250"/>
    <property type="project" value="UniProtKB"/>
</dbReference>
<dbReference type="GO" id="GO:0035630">
    <property type="term" value="P:bone mineralization involved in bone maturation"/>
    <property type="evidence" value="ECO:0007669"/>
    <property type="project" value="Ensembl"/>
</dbReference>
<dbReference type="GO" id="GO:0003300">
    <property type="term" value="P:cardiac muscle hypertrophy"/>
    <property type="evidence" value="ECO:0007669"/>
    <property type="project" value="Ensembl"/>
</dbReference>
<dbReference type="GO" id="GO:0007259">
    <property type="term" value="P:cell surface receptor signaling pathway via JAK-STAT"/>
    <property type="evidence" value="ECO:0007669"/>
    <property type="project" value="Ensembl"/>
</dbReference>
<dbReference type="GO" id="GO:0097696">
    <property type="term" value="P:cell surface receptor signaling pathway via STAT"/>
    <property type="evidence" value="ECO:0000314"/>
    <property type="project" value="ARUK-UCL"/>
</dbReference>
<dbReference type="GO" id="GO:0032869">
    <property type="term" value="P:cellular response to insulin stimulus"/>
    <property type="evidence" value="ECO:0007669"/>
    <property type="project" value="Ensembl"/>
</dbReference>
<dbReference type="GO" id="GO:0071298">
    <property type="term" value="P:cellular response to L-ascorbic acid"/>
    <property type="evidence" value="ECO:0007669"/>
    <property type="project" value="Ensembl"/>
</dbReference>
<dbReference type="GO" id="GO:0044320">
    <property type="term" value="P:cellular response to leptin stimulus"/>
    <property type="evidence" value="ECO:0000314"/>
    <property type="project" value="UniProtKB"/>
</dbReference>
<dbReference type="GO" id="GO:0071300">
    <property type="term" value="P:cellular response to retinoic acid"/>
    <property type="evidence" value="ECO:0007669"/>
    <property type="project" value="Ensembl"/>
</dbReference>
<dbReference type="GO" id="GO:0021954">
    <property type="term" value="P:central nervous system neuron development"/>
    <property type="evidence" value="ECO:0007669"/>
    <property type="project" value="Ensembl"/>
</dbReference>
<dbReference type="GO" id="GO:0008203">
    <property type="term" value="P:cholesterol metabolic process"/>
    <property type="evidence" value="ECO:0007669"/>
    <property type="project" value="Ensembl"/>
</dbReference>
<dbReference type="GO" id="GO:0007623">
    <property type="term" value="P:circadian rhythm"/>
    <property type="evidence" value="ECO:0007669"/>
    <property type="project" value="Ensembl"/>
</dbReference>
<dbReference type="GO" id="GO:0008340">
    <property type="term" value="P:determination of adult lifespan"/>
    <property type="evidence" value="ECO:0007669"/>
    <property type="project" value="Ensembl"/>
</dbReference>
<dbReference type="GO" id="GO:0042755">
    <property type="term" value="P:eating behavior"/>
    <property type="evidence" value="ECO:0007669"/>
    <property type="project" value="Ensembl"/>
</dbReference>
<dbReference type="GO" id="GO:0051541">
    <property type="term" value="P:elastin metabolic process"/>
    <property type="evidence" value="ECO:0007669"/>
    <property type="project" value="Ensembl"/>
</dbReference>
<dbReference type="GO" id="GO:0097009">
    <property type="term" value="P:energy homeostasis"/>
    <property type="evidence" value="ECO:0000250"/>
    <property type="project" value="UniProt"/>
</dbReference>
<dbReference type="GO" id="GO:0006112">
    <property type="term" value="P:energy reserve metabolic process"/>
    <property type="evidence" value="ECO:0000318"/>
    <property type="project" value="GO_Central"/>
</dbReference>
<dbReference type="GO" id="GO:0006635">
    <property type="term" value="P:fatty acid beta-oxidation"/>
    <property type="evidence" value="ECO:0007669"/>
    <property type="project" value="Ensembl"/>
</dbReference>
<dbReference type="GO" id="GO:0007565">
    <property type="term" value="P:female pregnancy"/>
    <property type="evidence" value="ECO:0007669"/>
    <property type="project" value="Ensembl"/>
</dbReference>
<dbReference type="GO" id="GO:0042593">
    <property type="term" value="P:glucose homeostasis"/>
    <property type="evidence" value="ECO:0007669"/>
    <property type="project" value="Ensembl"/>
</dbReference>
<dbReference type="GO" id="GO:0006006">
    <property type="term" value="P:glucose metabolic process"/>
    <property type="evidence" value="ECO:0007669"/>
    <property type="project" value="Ensembl"/>
</dbReference>
<dbReference type="GO" id="GO:0006114">
    <property type="term" value="P:glycerol biosynthetic process"/>
    <property type="evidence" value="ECO:0007669"/>
    <property type="project" value="Ensembl"/>
</dbReference>
<dbReference type="GO" id="GO:0042445">
    <property type="term" value="P:hormone metabolic process"/>
    <property type="evidence" value="ECO:0007669"/>
    <property type="project" value="Ensembl"/>
</dbReference>
<dbReference type="GO" id="GO:0030073">
    <property type="term" value="P:insulin secretion"/>
    <property type="evidence" value="ECO:0007669"/>
    <property type="project" value="Ensembl"/>
</dbReference>
<dbReference type="GO" id="GO:0050892">
    <property type="term" value="P:intestinal absorption"/>
    <property type="evidence" value="ECO:0000314"/>
    <property type="project" value="UniProtKB"/>
</dbReference>
<dbReference type="GO" id="GO:0035556">
    <property type="term" value="P:intracellular signal transduction"/>
    <property type="evidence" value="ECO:0007669"/>
    <property type="project" value="Ensembl"/>
</dbReference>
<dbReference type="GO" id="GO:0033210">
    <property type="term" value="P:leptin-mediated signaling pathway"/>
    <property type="evidence" value="ECO:0000314"/>
    <property type="project" value="ARUK-UCL"/>
</dbReference>
<dbReference type="GO" id="GO:0050901">
    <property type="term" value="P:leukocyte tethering or rolling"/>
    <property type="evidence" value="ECO:0007669"/>
    <property type="project" value="Ensembl"/>
</dbReference>
<dbReference type="GO" id="GO:0006629">
    <property type="term" value="P:lipid metabolic process"/>
    <property type="evidence" value="ECO:0000318"/>
    <property type="project" value="GO_Central"/>
</dbReference>
<dbReference type="GO" id="GO:0043066">
    <property type="term" value="P:negative regulation of apoptotic process"/>
    <property type="evidence" value="ECO:0007669"/>
    <property type="project" value="Ensembl"/>
</dbReference>
<dbReference type="GO" id="GO:0032099">
    <property type="term" value="P:negative regulation of appetite"/>
    <property type="evidence" value="ECO:0000250"/>
    <property type="project" value="HGNC-UCL"/>
</dbReference>
<dbReference type="GO" id="GO:0038108">
    <property type="term" value="P:negative regulation of appetite by leptin-mediated signaling pathway"/>
    <property type="evidence" value="ECO:0000250"/>
    <property type="project" value="UniProtKB"/>
</dbReference>
<dbReference type="GO" id="GO:0010507">
    <property type="term" value="P:negative regulation of autophagy"/>
    <property type="evidence" value="ECO:0000314"/>
    <property type="project" value="UniProtKB"/>
</dbReference>
<dbReference type="GO" id="GO:0061037">
    <property type="term" value="P:negative regulation of cartilage development"/>
    <property type="evidence" value="ECO:0007669"/>
    <property type="project" value="Ensembl"/>
</dbReference>
<dbReference type="GO" id="GO:0046325">
    <property type="term" value="P:negative regulation of D-glucose import"/>
    <property type="evidence" value="ECO:0000314"/>
    <property type="project" value="UniProtKB"/>
</dbReference>
<dbReference type="GO" id="GO:0070093">
    <property type="term" value="P:negative regulation of glucagon secretion"/>
    <property type="evidence" value="ECO:0007669"/>
    <property type="project" value="Ensembl"/>
</dbReference>
<dbReference type="GO" id="GO:2000486">
    <property type="term" value="P:negative regulation of glutamine transport"/>
    <property type="evidence" value="ECO:0007669"/>
    <property type="project" value="Ensembl"/>
</dbReference>
<dbReference type="GO" id="GO:0010888">
    <property type="term" value="P:negative regulation of lipid storage"/>
    <property type="evidence" value="ECO:0007669"/>
    <property type="project" value="Ensembl"/>
</dbReference>
<dbReference type="GO" id="GO:0000122">
    <property type="term" value="P:negative regulation of transcription by RNA polymerase II"/>
    <property type="evidence" value="ECO:0007669"/>
    <property type="project" value="Ensembl"/>
</dbReference>
<dbReference type="GO" id="GO:0045906">
    <property type="term" value="P:negative regulation of vasoconstriction"/>
    <property type="evidence" value="ECO:0007669"/>
    <property type="project" value="Ensembl"/>
</dbReference>
<dbReference type="GO" id="GO:0001542">
    <property type="term" value="P:ovulation from ovarian follicle"/>
    <property type="evidence" value="ECO:0007669"/>
    <property type="project" value="Ensembl"/>
</dbReference>
<dbReference type="GO" id="GO:0006909">
    <property type="term" value="P:phagocytosis"/>
    <property type="evidence" value="ECO:0007669"/>
    <property type="project" value="Ensembl"/>
</dbReference>
<dbReference type="GO" id="GO:0001890">
    <property type="term" value="P:placenta development"/>
    <property type="evidence" value="ECO:0000314"/>
    <property type="project" value="DFLAT"/>
</dbReference>
<dbReference type="GO" id="GO:0120162">
    <property type="term" value="P:positive regulation of cold-induced thermogenesis"/>
    <property type="evidence" value="ECO:0000250"/>
    <property type="project" value="YuBioLab"/>
</dbReference>
<dbReference type="GO" id="GO:0048639">
    <property type="term" value="P:positive regulation of developmental growth"/>
    <property type="evidence" value="ECO:0000314"/>
    <property type="project" value="DFLAT"/>
</dbReference>
<dbReference type="GO" id="GO:1904651">
    <property type="term" value="P:positive regulation of fat cell apoptotic process"/>
    <property type="evidence" value="ECO:0007669"/>
    <property type="project" value="Ensembl"/>
</dbReference>
<dbReference type="GO" id="GO:0046881">
    <property type="term" value="P:positive regulation of follicle-stimulating hormone secretion"/>
    <property type="evidence" value="ECO:0007669"/>
    <property type="project" value="Ensembl"/>
</dbReference>
<dbReference type="GO" id="GO:2000491">
    <property type="term" value="P:positive regulation of hepatic stellate cell activation"/>
    <property type="evidence" value="ECO:0007669"/>
    <property type="project" value="Ensembl"/>
</dbReference>
<dbReference type="GO" id="GO:0046628">
    <property type="term" value="P:positive regulation of insulin receptor signaling pathway"/>
    <property type="evidence" value="ECO:0007669"/>
    <property type="project" value="Ensembl"/>
</dbReference>
<dbReference type="GO" id="GO:0032735">
    <property type="term" value="P:positive regulation of interleukin-12 production"/>
    <property type="evidence" value="ECO:0007669"/>
    <property type="project" value="Ensembl"/>
</dbReference>
<dbReference type="GO" id="GO:0032755">
    <property type="term" value="P:positive regulation of interleukin-6 production"/>
    <property type="evidence" value="ECO:0000314"/>
    <property type="project" value="UniProtKB"/>
</dbReference>
<dbReference type="GO" id="GO:0032757">
    <property type="term" value="P:positive regulation of interleukin-8 production"/>
    <property type="evidence" value="ECO:0000314"/>
    <property type="project" value="UniProtKB"/>
</dbReference>
<dbReference type="GO" id="GO:0033686">
    <property type="term" value="P:positive regulation of luteinizing hormone secretion"/>
    <property type="evidence" value="ECO:0007669"/>
    <property type="project" value="Ensembl"/>
</dbReference>
<dbReference type="GO" id="GO:0043410">
    <property type="term" value="P:positive regulation of MAPK cascade"/>
    <property type="evidence" value="ECO:0000314"/>
    <property type="project" value="UniProtKB"/>
</dbReference>
<dbReference type="GO" id="GO:0043270">
    <property type="term" value="P:positive regulation of monoatomic ion transport"/>
    <property type="evidence" value="ECO:0007669"/>
    <property type="project" value="Ensembl"/>
</dbReference>
<dbReference type="GO" id="GO:1900745">
    <property type="term" value="P:positive regulation of p38MAPK cascade"/>
    <property type="evidence" value="ECO:0000314"/>
    <property type="project" value="UniProtKB"/>
</dbReference>
<dbReference type="GO" id="GO:0035360">
    <property type="term" value="P:positive regulation of peroxisome proliferator activated receptor signaling pathway"/>
    <property type="evidence" value="ECO:0007669"/>
    <property type="project" value="Ensembl"/>
</dbReference>
<dbReference type="GO" id="GO:0051897">
    <property type="term" value="P:positive regulation of phosphatidylinositol 3-kinase/protein kinase B signal transduction"/>
    <property type="evidence" value="ECO:0000250"/>
    <property type="project" value="UniProtKB"/>
</dbReference>
<dbReference type="GO" id="GO:0042307">
    <property type="term" value="P:positive regulation of protein import into nucleus"/>
    <property type="evidence" value="ECO:0007669"/>
    <property type="project" value="Ensembl"/>
</dbReference>
<dbReference type="GO" id="GO:2000379">
    <property type="term" value="P:positive regulation of reactive oxygen species metabolic process"/>
    <property type="evidence" value="ECO:0007669"/>
    <property type="project" value="Ensembl"/>
</dbReference>
<dbReference type="GO" id="GO:0046427">
    <property type="term" value="P:positive regulation of receptor signaling pathway via JAK-STAT"/>
    <property type="evidence" value="ECO:0000314"/>
    <property type="project" value="UniProtKB"/>
</dbReference>
<dbReference type="GO" id="GO:0042102">
    <property type="term" value="P:positive regulation of T cell proliferation"/>
    <property type="evidence" value="ECO:0000314"/>
    <property type="project" value="UniProtKB"/>
</dbReference>
<dbReference type="GO" id="GO:0032008">
    <property type="term" value="P:positive regulation of TOR signaling"/>
    <property type="evidence" value="ECO:0000314"/>
    <property type="project" value="UniProtKB"/>
</dbReference>
<dbReference type="GO" id="GO:0032760">
    <property type="term" value="P:positive regulation of tumor necrosis factor production"/>
    <property type="evidence" value="ECO:0007669"/>
    <property type="project" value="Ensembl"/>
</dbReference>
<dbReference type="GO" id="GO:0032310">
    <property type="term" value="P:prostaglandin secretion"/>
    <property type="evidence" value="ECO:0000314"/>
    <property type="project" value="UniProtKB"/>
</dbReference>
<dbReference type="GO" id="GO:0045765">
    <property type="term" value="P:regulation of angiogenesis"/>
    <property type="evidence" value="ECO:0000314"/>
    <property type="project" value="UniProtKB"/>
</dbReference>
<dbReference type="GO" id="GO:0008217">
    <property type="term" value="P:regulation of blood pressure"/>
    <property type="evidence" value="ECO:0007669"/>
    <property type="project" value="Ensembl"/>
</dbReference>
<dbReference type="GO" id="GO:0046850">
    <property type="term" value="P:regulation of bone remodeling"/>
    <property type="evidence" value="ECO:0000250"/>
    <property type="project" value="UniProtKB"/>
</dbReference>
<dbReference type="GO" id="GO:0090335">
    <property type="term" value="P:regulation of brown fat cell differentiation"/>
    <property type="evidence" value="ECO:0000250"/>
    <property type="project" value="UniProtKB"/>
</dbReference>
<dbReference type="GO" id="GO:0051726">
    <property type="term" value="P:regulation of cell cycle"/>
    <property type="evidence" value="ECO:0000314"/>
    <property type="project" value="UniProtKB"/>
</dbReference>
<dbReference type="GO" id="GO:1900015">
    <property type="term" value="P:regulation of cytokine production involved in inflammatory response"/>
    <property type="evidence" value="ECO:0000314"/>
    <property type="project" value="UniProtKB"/>
</dbReference>
<dbReference type="GO" id="GO:0001936">
    <property type="term" value="P:regulation of endothelial cell proliferation"/>
    <property type="evidence" value="ECO:0000314"/>
    <property type="project" value="UniProtKB"/>
</dbReference>
<dbReference type="GO" id="GO:0006111">
    <property type="term" value="P:regulation of gluconeogenesis"/>
    <property type="evidence" value="ECO:0007669"/>
    <property type="project" value="Ensembl"/>
</dbReference>
<dbReference type="GO" id="GO:0050796">
    <property type="term" value="P:regulation of insulin secretion"/>
    <property type="evidence" value="ECO:0007669"/>
    <property type="project" value="Ensembl"/>
</dbReference>
<dbReference type="GO" id="GO:0030300">
    <property type="term" value="P:regulation of intestinal cholesterol absorption"/>
    <property type="evidence" value="ECO:0007669"/>
    <property type="project" value="Ensembl"/>
</dbReference>
<dbReference type="GO" id="GO:0060587">
    <property type="term" value="P:regulation of lipoprotein lipid oxidation"/>
    <property type="evidence" value="ECO:0007669"/>
    <property type="project" value="Ensembl"/>
</dbReference>
<dbReference type="GO" id="GO:0032814">
    <property type="term" value="P:regulation of natural killer cell activation"/>
    <property type="evidence" value="ECO:0000314"/>
    <property type="project" value="UniProtKB"/>
</dbReference>
<dbReference type="GO" id="GO:0042269">
    <property type="term" value="P:regulation of natural killer cell mediated cytotoxicity"/>
    <property type="evidence" value="ECO:0000314"/>
    <property type="project" value="UniProtKB"/>
</dbReference>
<dbReference type="GO" id="GO:0032817">
    <property type="term" value="P:regulation of natural killer cell proliferation"/>
    <property type="evidence" value="ECO:0000314"/>
    <property type="project" value="UniProtKB"/>
</dbReference>
<dbReference type="GO" id="GO:0050999">
    <property type="term" value="P:regulation of nitric-oxide synthase activity"/>
    <property type="evidence" value="ECO:0000314"/>
    <property type="project" value="UniProtKB"/>
</dbReference>
<dbReference type="GO" id="GO:0050810">
    <property type="term" value="P:regulation of steroid biosynthetic process"/>
    <property type="evidence" value="ECO:0007669"/>
    <property type="project" value="Ensembl"/>
</dbReference>
<dbReference type="GO" id="GO:0014823">
    <property type="term" value="P:response to activity"/>
    <property type="evidence" value="ECO:0007669"/>
    <property type="project" value="Ensembl"/>
</dbReference>
<dbReference type="GO" id="GO:0002021">
    <property type="term" value="P:response to dietary excess"/>
    <property type="evidence" value="ECO:0007669"/>
    <property type="project" value="Ensembl"/>
</dbReference>
<dbReference type="GO" id="GO:0032355">
    <property type="term" value="P:response to estradiol"/>
    <property type="evidence" value="ECO:0007669"/>
    <property type="project" value="Ensembl"/>
</dbReference>
<dbReference type="GO" id="GO:0045471">
    <property type="term" value="P:response to ethanol"/>
    <property type="evidence" value="ECO:0007669"/>
    <property type="project" value="Ensembl"/>
</dbReference>
<dbReference type="GO" id="GO:0001666">
    <property type="term" value="P:response to hypoxia"/>
    <property type="evidence" value="ECO:0007669"/>
    <property type="project" value="Ensembl"/>
</dbReference>
<dbReference type="GO" id="GO:0032868">
    <property type="term" value="P:response to insulin"/>
    <property type="evidence" value="ECO:0000318"/>
    <property type="project" value="GO_Central"/>
</dbReference>
<dbReference type="GO" id="GO:0033197">
    <property type="term" value="P:response to vitamin E"/>
    <property type="evidence" value="ECO:0007669"/>
    <property type="project" value="Ensembl"/>
</dbReference>
<dbReference type="GO" id="GO:0019953">
    <property type="term" value="P:sexual reproduction"/>
    <property type="evidence" value="ECO:0000315"/>
    <property type="project" value="UniProtKB"/>
</dbReference>
<dbReference type="GO" id="GO:0030217">
    <property type="term" value="P:T cell differentiation"/>
    <property type="evidence" value="ECO:0000250"/>
    <property type="project" value="UniProtKB"/>
</dbReference>
<dbReference type="FunFam" id="1.20.1250.10:FF:000008">
    <property type="entry name" value="Leptin"/>
    <property type="match status" value="1"/>
</dbReference>
<dbReference type="Gene3D" id="1.20.1250.10">
    <property type="match status" value="1"/>
</dbReference>
<dbReference type="InterPro" id="IPR009079">
    <property type="entry name" value="4_helix_cytokine-like_core"/>
</dbReference>
<dbReference type="InterPro" id="IPR000065">
    <property type="entry name" value="Leptin"/>
</dbReference>
<dbReference type="PANTHER" id="PTHR11724">
    <property type="entry name" value="LEPTIN"/>
    <property type="match status" value="1"/>
</dbReference>
<dbReference type="PANTHER" id="PTHR11724:SF1">
    <property type="entry name" value="LEPTIN"/>
    <property type="match status" value="1"/>
</dbReference>
<dbReference type="Pfam" id="PF02024">
    <property type="entry name" value="Leptin"/>
    <property type="match status" value="1"/>
</dbReference>
<dbReference type="PIRSF" id="PIRSF001837">
    <property type="entry name" value="Leptin"/>
    <property type="match status" value="1"/>
</dbReference>
<dbReference type="PRINTS" id="PR00495">
    <property type="entry name" value="LEPTIN"/>
</dbReference>
<dbReference type="SUPFAM" id="SSF47266">
    <property type="entry name" value="4-helical cytokines"/>
    <property type="match status" value="1"/>
</dbReference>
<evidence type="ECO:0000250" key="1">
    <source>
        <dbReference type="UniProtKB" id="P41160"/>
    </source>
</evidence>
<evidence type="ECO:0000250" key="2">
    <source>
        <dbReference type="UniProtKB" id="P50596"/>
    </source>
</evidence>
<evidence type="ECO:0000255" key="3"/>
<evidence type="ECO:0000269" key="4">
    <source>
    </source>
</evidence>
<evidence type="ECO:0000269" key="5">
    <source>
    </source>
</evidence>
<evidence type="ECO:0000269" key="6">
    <source>
    </source>
</evidence>
<evidence type="ECO:0000269" key="7">
    <source>
    </source>
</evidence>
<evidence type="ECO:0000269" key="8">
    <source>
    </source>
</evidence>
<evidence type="ECO:0000269" key="9">
    <source>
    </source>
</evidence>
<evidence type="ECO:0000269" key="10">
    <source>
    </source>
</evidence>
<evidence type="ECO:0000269" key="11">
    <source>
    </source>
</evidence>
<evidence type="ECO:0000269" key="12">
    <source>
    </source>
</evidence>
<evidence type="ECO:0000269" key="13">
    <source>
    </source>
</evidence>
<evidence type="ECO:0000269" key="14">
    <source>
    </source>
</evidence>
<evidence type="ECO:0000269" key="15">
    <source>
    </source>
</evidence>
<evidence type="ECO:0000269" key="16">
    <source>
    </source>
</evidence>
<evidence type="ECO:0000269" key="17">
    <source>
    </source>
</evidence>
<evidence type="ECO:0000269" key="18">
    <source>
    </source>
</evidence>
<evidence type="ECO:0000269" key="19">
    <source>
    </source>
</evidence>
<evidence type="ECO:0000269" key="20">
    <source>
    </source>
</evidence>
<evidence type="ECO:0000269" key="21">
    <source ref="9"/>
</evidence>
<evidence type="ECO:0000305" key="22"/>
<evidence type="ECO:0000305" key="23">
    <source>
    </source>
</evidence>
<evidence type="ECO:0000305" key="24">
    <source>
    </source>
</evidence>
<evidence type="ECO:0000312" key="25">
    <source>
        <dbReference type="HGNC" id="HGNC:6553"/>
    </source>
</evidence>
<evidence type="ECO:0007829" key="26">
    <source>
        <dbReference type="PDB" id="1AX8"/>
    </source>
</evidence>
<evidence type="ECO:0007829" key="27">
    <source>
        <dbReference type="PDB" id="8K6Z"/>
    </source>
</evidence>
<reference key="1">
    <citation type="journal article" date="1994" name="Nature">
        <title>Positional cloning of the mouse obese gene and its human homologue.</title>
        <authorList>
            <person name="Zhang Y."/>
            <person name="Proenca P."/>
            <person name="Maffei M."/>
            <person name="Barone M."/>
            <person name="Leopold L."/>
            <person name="Friedman J.M."/>
        </authorList>
    </citation>
    <scope>NUCLEOTIDE SEQUENCE [MRNA]</scope>
</reference>
<reference key="2">
    <citation type="journal article" date="1995" name="Nature">
        <authorList>
            <person name="Zhang Y."/>
            <person name="Proenca P."/>
            <person name="Maffei M."/>
            <person name="Barone M."/>
            <person name="Leopold L."/>
            <person name="Friedman J.M."/>
        </authorList>
    </citation>
    <scope>ERRATUM OF PUBMED:7984236</scope>
</reference>
<reference key="3">
    <citation type="journal article" date="1995" name="Diabetes">
        <title>Human obese gene expression. Adipocyte-specific expression and regional differences in the adipose tissue.</title>
        <authorList>
            <person name="Masuzaki H."/>
            <person name="Ogawa Y."/>
            <person name="Isse N."/>
            <person name="Satoh N."/>
            <person name="Okazaki T."/>
            <person name="Shigemoto M."/>
            <person name="Mori K."/>
            <person name="Tamura N."/>
            <person name="Hosoda K."/>
            <person name="Yoshimasa Y."/>
            <person name="Jingami H."/>
            <person name="Kawada T."/>
            <person name="Nakao K."/>
        </authorList>
    </citation>
    <scope>NUCLEOTIDE SEQUENCE [MRNA]</scope>
    <scope>TISSUE SPECIFICITY</scope>
</reference>
<reference key="4">
    <citation type="journal article" date="1996" name="J. Biol. Chem.">
        <title>Genomic structure and promoter analysis of the human obese gene.</title>
        <authorList>
            <person name="Gong D.W."/>
            <person name="Bi S."/>
            <person name="Pratley R.E."/>
            <person name="Weintraub B.D."/>
        </authorList>
    </citation>
    <scope>NUCLEOTIDE SEQUENCE [MRNA]</scope>
</reference>
<reference key="5">
    <citation type="submission" date="1995-12" db="EMBL/GenBank/DDBJ databases">
        <authorList>
            <person name="Chehab F.F."/>
            <person name="Lim M.E."/>
        </authorList>
    </citation>
    <scope>NUCLEOTIDE SEQUENCE [GENOMIC DNA]</scope>
</reference>
<reference key="6">
    <citation type="journal article" date="1995" name="J. Biol. Chem.">
        <title>Structural organization and chromosomal assignment of the human obese gene.</title>
        <authorList>
            <person name="Isse N."/>
            <person name="Ogawa Y."/>
            <person name="Tamura N."/>
            <person name="Masuzaki H."/>
            <person name="Mori K."/>
            <person name="Okazaki T."/>
            <person name="Satoh N."/>
            <person name="Shigemoto M."/>
            <person name="Yoshimasa Y."/>
            <person name="Nishi S."/>
            <person name="Hosada K."/>
            <person name="Inazawa J."/>
            <person name="Nakao K."/>
        </authorList>
    </citation>
    <scope>NUCLEOTIDE SEQUENCE [GENOMIC DNA]</scope>
</reference>
<reference key="7">
    <citation type="journal article" date="1996" name="Diabetes">
        <title>Human obese gene: molecular screening in Japanese and Asian Indian NIDDM patients associated with obesity.</title>
        <authorList>
            <person name="Niki T."/>
            <person name="Mori H."/>
            <person name="Tamori Y."/>
            <person name="Kishimoto-Hashiramoto M."/>
            <person name="Ueno H."/>
            <person name="Araki S."/>
            <person name="Masugi J."/>
            <person name="Sawant N."/>
            <person name="Majithia H.R."/>
            <person name="Rais N."/>
            <person name="Hashiramoto M."/>
            <person name="Taniguchi H."/>
            <person name="Kasuga M."/>
        </authorList>
    </citation>
    <scope>NUCLEOTIDE SEQUENCE [GENOMIC DNA]</scope>
</reference>
<reference key="8">
    <citation type="submission" date="1997-06" db="EMBL/GenBank/DDBJ databases">
        <authorList>
            <person name="Lu L."/>
            <person name="Fu Z."/>
            <person name="Xu M."/>
            <person name="Fu Y."/>
            <person name="Hu Z."/>
        </authorList>
    </citation>
    <scope>NUCLEOTIDE SEQUENCE [MRNA]</scope>
</reference>
<reference key="9">
    <citation type="submission" date="2005-04" db="EMBL/GenBank/DDBJ databases">
        <authorList>
            <consortium name="SeattleSNPs variation discovery resource"/>
        </authorList>
    </citation>
    <scope>NUCLEOTIDE SEQUENCE [GENOMIC DNA]</scope>
    <scope>VARIANT MET-94</scope>
</reference>
<reference key="10">
    <citation type="journal article" date="2004" name="Genome Res.">
        <title>The status, quality, and expansion of the NIH full-length cDNA project: the Mammalian Gene Collection (MGC).</title>
        <authorList>
            <consortium name="The MGC Project Team"/>
        </authorList>
    </citation>
    <scope>NUCLEOTIDE SEQUENCE [LARGE SCALE MRNA]</scope>
    <source>
        <tissue>Placenta</tissue>
    </source>
</reference>
<reference key="11">
    <citation type="journal article" date="1996" name="Nat. Genet.">
        <title>Correction of the sterility defect in homozygous obese female mice by treatment with the human recombinant leptin.</title>
        <authorList>
            <person name="Chehab F.F."/>
            <person name="Lim M.E."/>
            <person name="Lu R."/>
        </authorList>
    </citation>
    <scope>FUNCTION</scope>
</reference>
<reference key="12">
    <citation type="journal article" date="1999" name="J. Biol. Chem.">
        <title>OB-BP1/Siglec-6. A leptin- and sialic acid-binding protein of the immunoglobulin superfamily.</title>
        <authorList>
            <person name="Patel N."/>
            <person name="Brinkman-Van der Linden E.C.M."/>
            <person name="Altmann S.W."/>
            <person name="Gish K.C."/>
            <person name="Balasubramanian S."/>
            <person name="Timans J.C."/>
            <person name="Peterson D."/>
            <person name="Bell M.P."/>
            <person name="Bazan J.F."/>
            <person name="Varki A."/>
            <person name="Kastelein R.A."/>
        </authorList>
    </citation>
    <scope>INTERACTION WITH SIGLEC6</scope>
</reference>
<reference key="13">
    <citation type="journal article" date="1999" name="J. Biol. Chem.">
        <authorList>
            <person name="Patel N."/>
            <person name="Brinkman-Van der Linden E.C.M."/>
            <person name="Altmann S.W."/>
            <person name="Gish K.C."/>
            <person name="Balasubramanian S."/>
            <person name="Timans J.C."/>
            <person name="Peterson D."/>
            <person name="Bell M.P."/>
            <person name="Bazan J.F."/>
            <person name="Varki A."/>
            <person name="Kastelein R.A."/>
        </authorList>
    </citation>
    <scope>ERRATUM OF PUBMED:10428856</scope>
</reference>
<reference key="14">
    <citation type="journal article" date="2000" name="Gut">
        <title>Leptin secretion and leptin receptor in the human stomach.</title>
        <authorList>
            <person name="Sobhani I."/>
            <person name="Bado A."/>
            <person name="Vissuzaine C."/>
            <person name="Buyse M."/>
            <person name="Kermorgant S."/>
            <person name="Laigneau J.P."/>
            <person name="Attoub S."/>
            <person name="Lehy T."/>
            <person name="Henin D."/>
            <person name="Mignon M."/>
            <person name="Lewin M.J."/>
        </authorList>
    </citation>
    <scope>TISSUE SPECIFICITY</scope>
    <scope>INDUCTION BY SECRETIN</scope>
</reference>
<reference key="15">
    <citation type="journal article" date="2001" name="Exp. Mol. Med.">
        <title>Potential role of leptin in angiogenesis: leptin induces endothelial cell proliferation and expression of matrix metalloproteinases in vivo and in vitro.</title>
        <authorList>
            <person name="Park H.Y."/>
            <person name="Kwon H.M."/>
            <person name="Lim H.J."/>
            <person name="Hong B.K."/>
            <person name="Lee J.Y."/>
            <person name="Park B.E."/>
            <person name="Jang Y."/>
            <person name="Cho S.Y."/>
            <person name="Kim H.S."/>
        </authorList>
    </citation>
    <scope>FUNCTION</scope>
</reference>
<reference key="16">
    <citation type="journal article" date="2002" name="J. Anat.">
        <title>Intralobular ducts of human major salivary glands contain leptin and its receptor.</title>
        <authorList>
            <person name="De Matteis R."/>
            <person name="Puxeddu R."/>
            <person name="Riva A."/>
            <person name="Cinti S."/>
        </authorList>
    </citation>
    <scope>TISSUE SPECIFICITY</scope>
</reference>
<reference key="17">
    <citation type="journal article" date="2003" name="Biochem. Biophys. Res. Commun.">
        <title>Expression of leptin receptors and response to leptin stimulation of human natural killer cell lines.</title>
        <authorList>
            <person name="Zhao Y."/>
            <person name="Sun R."/>
            <person name="You L."/>
            <person name="Gao C."/>
            <person name="Tian Z."/>
        </authorList>
    </citation>
    <scope>FUNCTION</scope>
</reference>
<reference key="18">
    <citation type="journal article" date="2004" name="Nat. Rev. Immunol.">
        <title>The weight of leptin in immunity.</title>
        <authorList>
            <person name="La Cava A."/>
            <person name="Matarese G."/>
        </authorList>
    </citation>
    <scope>REVIEW OF FUNCTION IN IMMUNITY</scope>
</reference>
<reference key="19">
    <citation type="journal article" date="2005" name="Arthritis Res. Ther.">
        <title>signaling pathway involved in nitric oxide synthase type II activation in chondrocytes: synergistic effect of leptin with interleukin-1.</title>
        <authorList>
            <person name="Otero M."/>
            <person name="Lago R."/>
            <person name="Lago F."/>
            <person name="Reino J.J."/>
            <person name="Gualillo O."/>
        </authorList>
    </citation>
    <scope>FUNCTION</scope>
</reference>
<reference key="20">
    <citation type="journal article" date="2005" name="J. Cell. Biochem.">
        <title>Leptin expression in human primary skeletal muscle cells is reduced during differentiation.</title>
        <authorList>
            <person name="Solberg R."/>
            <person name="Aas V."/>
            <person name="Thoresen G.H."/>
            <person name="Kase E.T."/>
            <person name="Drevon C.A."/>
            <person name="Rustan A.C."/>
            <person name="Reseland J.E."/>
        </authorList>
    </citation>
    <scope>TISSUE SPECIFICITY</scope>
</reference>
<reference key="21">
    <citation type="journal article" date="2007" name="J. Biol. Chem.">
        <title>leptin-induced growth stimulation of breast cancer cells involves recruitment of histone acetyltransferases and mediator complex to CYCLIN D1 promoter via activation of Stat3.</title>
        <authorList>
            <person name="Saxena N.K."/>
            <person name="Vertino P.M."/>
            <person name="Anania F.A."/>
            <person name="Sharma D."/>
        </authorList>
    </citation>
    <scope>FUNCTION</scope>
</reference>
<reference key="22">
    <citation type="journal article" date="2008" name="Biochem. Biophys. Res. Commun.">
        <title>up-regulation of survivin by leptin/STAT3 signaling in MCF-7 cells.</title>
        <authorList>
            <person name="Jiang H."/>
            <person name="Yu J."/>
            <person name="Guo H."/>
            <person name="Song H."/>
            <person name="Chen S."/>
        </authorList>
    </citation>
    <scope>FUNCTION</scope>
</reference>
<reference key="23">
    <citation type="journal article" date="2009" name="Mediators Inflamm.">
        <title>Leptin enhances synthesis of proinflammatory mediators in human osteoarthritic cartilage--mediator role of NO in leptin-induced PGE2, IL-6, and IL-8 production.</title>
        <authorList>
            <person name="Vuolteenaho K."/>
            <person name="Koskinen A."/>
            <person name="Kukkonen M."/>
            <person name="Nieminen R."/>
            <person name="Paeivaerinta U."/>
            <person name="Moilanen T."/>
            <person name="Moilanen E."/>
        </authorList>
    </citation>
    <scope>FUNCTION</scope>
</reference>
<reference key="24">
    <citation type="journal article" date="2013" name="PLoS ONE">
        <title>Leptin inhibits glucose intestinal absorption via PKC, p38MAPK, PI3K and MEK/ERK.</title>
        <authorList>
            <person name="El-Zein O."/>
            <person name="Kreydiyyeh S.I."/>
        </authorList>
    </citation>
    <scope>FUNCTION</scope>
</reference>
<reference key="25">
    <citation type="journal article" date="2014" name="J. Endocrinol.">
        <title>20 years of leptin: connecting leptin signaling to biological function.</title>
        <authorList>
            <person name="Allison M.B."/>
            <person name="Myers M.G. Jr."/>
        </authorList>
    </citation>
    <scope>REVIEW OF FUNCTION</scope>
</reference>
<reference key="26">
    <citation type="journal article" date="2014" name="Metabolism">
        <title>Leptin modulates autophagy in human CD4+CD25- conventional T cells.</title>
        <authorList>
            <person name="Cassano S."/>
            <person name="Pucino V."/>
            <person name="La Rocca C."/>
            <person name="Procaccini C."/>
            <person name="De Rosa V."/>
            <person name="Marone G."/>
            <person name="Matarese G."/>
        </authorList>
    </citation>
    <scope>FUNCTION</scope>
</reference>
<reference key="27">
    <citation type="journal article" date="1997" name="FEBS Lett.">
        <title>Leptin is a four-helix bundle: secondary structure by NMR.</title>
        <authorList>
            <person name="Kline A.D."/>
            <person name="Becker G.W."/>
            <person name="Churgay L.M."/>
            <person name="Landen B.E."/>
            <person name="Martin D.K."/>
            <person name="Muth W.L."/>
            <person name="Rathnachalam R."/>
            <person name="Richardson J.M."/>
            <person name="Schoner B."/>
            <person name="Ulmer M."/>
            <person name="Hale J.E."/>
        </authorList>
    </citation>
    <scope>STRUCTURE BY NMR</scope>
</reference>
<reference key="28">
    <citation type="journal article" date="1997" name="Nature">
        <title>Crystal structure of the obese protein leptin-E100.</title>
        <authorList>
            <person name="Zhang F."/>
            <person name="Basinski M.B."/>
            <person name="Beals J.M."/>
            <person name="Briggs S.L."/>
            <person name="Churgay L.M."/>
            <person name="Clawson D.K."/>
            <person name="Dimarchi R.D."/>
            <person name="Furman T.C."/>
            <person name="Hale J.E."/>
            <person name="Hsiung H.M."/>
            <person name="Schoner B.E."/>
            <person name="Smith D.P."/>
            <person name="Zhang X.Y."/>
            <person name="Wery J.P."/>
            <person name="Schevitz R.W."/>
        </authorList>
    </citation>
    <scope>X-RAY CRYSTALLOGRAPHY (2.4 ANGSTROMS)</scope>
</reference>
<reference key="29">
    <citation type="journal article" date="1998" name="Hum. Mutat.">
        <title>A novel polymorphism in the leptin gene.</title>
        <authorList>
            <person name="Bartholomew D.W."/>
            <person name="McClellan J.M."/>
        </authorList>
    </citation>
    <scope>VARIANT MET-94</scope>
</reference>
<reference key="30">
    <citation type="journal article" date="1998" name="Nat. Genet.">
        <title>A leptin missense mutation associated with hypogonadism and morbid obesity.</title>
        <authorList>
            <person name="Strobel A."/>
            <person name="Issad T."/>
            <person name="Camoin L."/>
            <person name="Ozata M."/>
            <person name="Strosberg A.D."/>
        </authorList>
    </citation>
    <scope>VARIANT LEPD TRP-105</scope>
</reference>
<reference key="31">
    <citation type="journal article" date="2015" name="N. Engl. J. Med.">
        <title>Biologically inactive leptin and early-onset extreme obesity.</title>
        <authorList>
            <person name="Wabitsch M."/>
            <person name="Funcke J.B."/>
            <person name="Lennerz B."/>
            <person name="Kuhnle-Krahl U."/>
            <person name="Lahr G."/>
            <person name="Debatin K.M."/>
            <person name="Vatter P."/>
            <person name="Gierschik P."/>
            <person name="Moepps B."/>
            <person name="Fischer-Posovszky P."/>
        </authorList>
    </citation>
    <scope>VARIANT LEPD TYR-100</scope>
    <scope>CHARACTERIZATION OF VARIANT LEPD TYR-100</scope>
</reference>
<comment type="function">
    <text evidence="1 2 6 8 9 11 12 13 14 15 18 23 24">Key player in the regulation of energy balance and body weight control. Once released into the circulation, has central and peripheral effects by binding LEPR, found in many tissues, which results in the activation of several major signaling pathways (PubMed:15899045, PubMed:17344214, PubMed:19688109). In the hypothalamus, acts as an appetite-regulating factor that induces a decrease in food intake and an increase in energy consumption by inducing anorexinogenic factors and suppressing orexigenic neuropeptides, also regulates bone mass and secretion of hypothalamo-pituitary-adrenal hormones. In the periphery, increases basal metabolism, influences reproductive function, regulates pancreatic beta-cell function and insulin secretion, is pro-angiogenic for endothelial cell and affects innate and adaptive immunity (By similarity) (PubMed:11460888, PubMed:19688109, PubMed:24340098, PubMed:25060689, PubMed:8589726). In the arcuate nucleus of the hypothalamus, activates by depolarization POMC neurons inducing FOS and SOCS3 expression to release anorexigenic peptides and inhibits by hyperpolarization NPY neurons inducing SOCS3 with a consequent reduction on release of orexigenic peptides (By similarity). In addition to its known satiety inducing effect, has a modulatory role in nutrient absorption. In the intestine, reduces glucose absorption by enterocytes by activating PKC and leading to a sequential activation of p38, PI3K and ERK signaling pathways which exerts an inhibitory effect on glucose absorption (PubMed:24340098). Acts as a growth factor on certain tissues, through the activation of different signaling pathways increases expression of genes involved in cell cycle regulation such as CCND1, via JAK2-STAT3 pathway, or VEGFA, via MAPK1/3 and PI3K-AKT1 pathways (By similarity) (PubMed:17344214). May also play an apoptotic role via JAK2-STAT3 pathway and up-regulation of BIRC5 expression (PubMed:18242580). Pro-angiogenic, has mitogenic activity on vascular endothelial cells and plays a role in matrix remodeling by regulating the expression of matrix metalloproteinases (MMPs) and tissue inhibitors of metalloproteinases (TIMPs) (PubMed:11460888). In innate immunity, modulates the activity and function of neutrophils by increasing chemotaxis and the secretion of oxygen radicals. Increases phagocytosis by macrophages and enhances secretion of pro-inflammatory mediators. Increases cytotoxic ability of NK cells (PubMed:12504075). Plays a pro-inflammatory role, in synergy with IL1B, by inducing NOS2 which promotes the production of IL6, IL8 and Prostaglandin E2, through a signaling pathway that involves JAK2, PI3K, MAP2K1/MEK1 and MAPK14/p38 (PubMed:15899045, PubMed:19688109). In adaptive immunity, promotes the switch of memory T-cells towards T helper-1 cell immune responses (By similarity). Increases CD4(+)CD25(-) T-cell proliferation and reduces autophagy during TCR (T-cell receptor) stimulation, through MTOR signaling pathway activation and BCL2 up-regulation (PubMed:25060689).</text>
</comment>
<comment type="subunit">
    <text evidence="4">Interacts with SIGLEC6.</text>
</comment>
<comment type="interaction">
    <interactant intactId="EBI-12994693">
        <id>P41159</id>
    </interactant>
    <interactant intactId="EBI-7116203">
        <id>O75031</id>
        <label>HSF2BP</label>
    </interactant>
    <organismsDiffer>false</organismsDiffer>
    <experiments>3</experiments>
</comment>
<comment type="interaction">
    <interactant intactId="EBI-12994693">
        <id>P41159</id>
    </interactant>
    <interactant intactId="EBI-518596">
        <id>P48357</id>
        <label>LEPR</label>
    </interactant>
    <organismsDiffer>false</organismsDiffer>
    <experiments>3</experiments>
</comment>
<comment type="subcellular location">
    <subcellularLocation>
        <location evidence="24">Secreted</location>
    </subcellularLocation>
</comment>
<comment type="tissue specificity">
    <text evidence="5 7 10 17">Adipose tissue is the main source of leptin. It is also produced by other peripheral tissues such as the skeletal muscle (PubMed:12448771, PubMed:16052473, PubMed:7789654). Expressed by intercalated and striated tracts of submandibular and parotid salivary gland intralobular ducts (PubMed:12448771). Detected by fundic epithelium of the gastric mucosa (PubMed:10896907). Secreted into blood and gastric juice (PubMed:10896907).</text>
</comment>
<comment type="induction">
    <text evidence="5">Induced by secretin.</text>
</comment>
<comment type="disease" evidence="16 20">
    <disease id="DI-03637">
        <name>Leptin deficiency</name>
        <acronym>LEPD</acronym>
        <description>A rare disease characterized by low levels of serum leptin, severe hyperphagia and intractable obesity from an early age.</description>
        <dbReference type="MIM" id="614962"/>
    </disease>
    <text>The disease is caused by variants affecting the gene represented in this entry.</text>
</comment>
<comment type="similarity">
    <text evidence="22">Belongs to the leptin family.</text>
</comment>
<comment type="online information" name="Wikipedia">
    <link uri="https://en.wikipedia.org/wiki/Leptin"/>
    <text>Leptin entry</text>
</comment>
<protein>
    <recommendedName>
        <fullName evidence="25">Leptin</fullName>
    </recommendedName>
    <alternativeName>
        <fullName>Obese protein</fullName>
    </alternativeName>
    <alternativeName>
        <fullName>Obesity factor</fullName>
    </alternativeName>
</protein>
<organism>
    <name type="scientific">Homo sapiens</name>
    <name type="common">Human</name>
    <dbReference type="NCBI Taxonomy" id="9606"/>
    <lineage>
        <taxon>Eukaryota</taxon>
        <taxon>Metazoa</taxon>
        <taxon>Chordata</taxon>
        <taxon>Craniata</taxon>
        <taxon>Vertebrata</taxon>
        <taxon>Euteleostomi</taxon>
        <taxon>Mammalia</taxon>
        <taxon>Eutheria</taxon>
        <taxon>Euarchontoglires</taxon>
        <taxon>Primates</taxon>
        <taxon>Haplorrhini</taxon>
        <taxon>Catarrhini</taxon>
        <taxon>Hominidae</taxon>
        <taxon>Homo</taxon>
    </lineage>
</organism>
<sequence>MHWGTLCGFLWLWPYLFYVQAVPIQKVQDDTKTLIKTIVTRINDISHTQSVSSKQKVTGLDFIPGLHPILTLSKMDQTLAVYQQILTSMPSRNVIQISNDLENLRDLLHVLAFSKSCHLPWASGLETLDSLGGVLEASGYSTEVVALSRLQGSLQDMLWQLDLSPGC</sequence>
<accession>P41159</accession>
<accession>O15158</accession>
<accession>Q56A88</accession>